<proteinExistence type="inferred from homology"/>
<gene>
    <name evidence="1" type="primary">murE</name>
    <name type="ordered locus">CTA_0291</name>
</gene>
<reference key="1">
    <citation type="journal article" date="2005" name="Infect. Immun.">
        <title>Comparative genomic analysis of Chlamydia trachomatis oculotropic and genitotropic strains.</title>
        <authorList>
            <person name="Carlson J.H."/>
            <person name="Porcella S.F."/>
            <person name="McClarty G."/>
            <person name="Caldwell H.D."/>
        </authorList>
    </citation>
    <scope>NUCLEOTIDE SEQUENCE [LARGE SCALE GENOMIC DNA]</scope>
    <source>
        <strain>ATCC VR-571B / DSM 19440 / HAR-13</strain>
    </source>
</reference>
<name>MURE_CHLTA</name>
<feature type="chain" id="PRO_1000012346" description="UDP-N-acetylmuramoyl-L-alanyl-D-glutamate--2,6-diaminopimelate ligase">
    <location>
        <begin position="1"/>
        <end position="483"/>
    </location>
</feature>
<feature type="short sequence motif" description="Meso-diaminopimelate recognition motif">
    <location>
        <begin position="403"/>
        <end position="406"/>
    </location>
</feature>
<feature type="binding site" evidence="1">
    <location>
        <position position="30"/>
    </location>
    <ligand>
        <name>UDP-N-acetyl-alpha-D-muramoyl-L-alanyl-D-glutamate</name>
        <dbReference type="ChEBI" id="CHEBI:83900"/>
    </ligand>
</feature>
<feature type="binding site" evidence="1">
    <location>
        <begin position="109"/>
        <end position="115"/>
    </location>
    <ligand>
        <name>ATP</name>
        <dbReference type="ChEBI" id="CHEBI:30616"/>
    </ligand>
</feature>
<feature type="binding site" evidence="1">
    <location>
        <begin position="151"/>
        <end position="152"/>
    </location>
    <ligand>
        <name>UDP-N-acetyl-alpha-D-muramoyl-L-alanyl-D-glutamate</name>
        <dbReference type="ChEBI" id="CHEBI:83900"/>
    </ligand>
</feature>
<feature type="binding site" evidence="1">
    <location>
        <position position="178"/>
    </location>
    <ligand>
        <name>UDP-N-acetyl-alpha-D-muramoyl-L-alanyl-D-glutamate</name>
        <dbReference type="ChEBI" id="CHEBI:83900"/>
    </ligand>
</feature>
<feature type="binding site" evidence="1">
    <location>
        <position position="186"/>
    </location>
    <ligand>
        <name>UDP-N-acetyl-alpha-D-muramoyl-L-alanyl-D-glutamate</name>
        <dbReference type="ChEBI" id="CHEBI:83900"/>
    </ligand>
</feature>
<feature type="binding site" evidence="1">
    <location>
        <position position="380"/>
    </location>
    <ligand>
        <name>meso-2,6-diaminopimelate</name>
        <dbReference type="ChEBI" id="CHEBI:57791"/>
    </ligand>
</feature>
<feature type="binding site" evidence="1">
    <location>
        <begin position="403"/>
        <end position="406"/>
    </location>
    <ligand>
        <name>meso-2,6-diaminopimelate</name>
        <dbReference type="ChEBI" id="CHEBI:57791"/>
    </ligand>
</feature>
<feature type="binding site" evidence="1">
    <location>
        <position position="453"/>
    </location>
    <ligand>
        <name>meso-2,6-diaminopimelate</name>
        <dbReference type="ChEBI" id="CHEBI:57791"/>
    </ligand>
</feature>
<feature type="binding site" evidence="1">
    <location>
        <position position="457"/>
    </location>
    <ligand>
        <name>meso-2,6-diaminopimelate</name>
        <dbReference type="ChEBI" id="CHEBI:57791"/>
    </ligand>
</feature>
<feature type="modified residue" description="N6-carboxylysine" evidence="1">
    <location>
        <position position="218"/>
    </location>
</feature>
<protein>
    <recommendedName>
        <fullName evidence="1">UDP-N-acetylmuramoyl-L-alanyl-D-glutamate--2,6-diaminopimelate ligase</fullName>
        <ecNumber evidence="1">6.3.2.13</ecNumber>
    </recommendedName>
    <alternativeName>
        <fullName evidence="1">Meso-A2pm-adding enzyme</fullName>
    </alternativeName>
    <alternativeName>
        <fullName evidence="1">Meso-diaminopimelate-adding enzyme</fullName>
    </alternativeName>
    <alternativeName>
        <fullName evidence="1">UDP-MurNAc-L-Ala-D-Glu:meso-diaminopimelate ligase</fullName>
    </alternativeName>
    <alternativeName>
        <fullName evidence="1">UDP-MurNAc-tripeptide synthetase</fullName>
    </alternativeName>
    <alternativeName>
        <fullName evidence="1">UDP-N-acetylmuramyl-tripeptide synthetase</fullName>
    </alternativeName>
</protein>
<comment type="function">
    <text evidence="1">Catalyzes the addition of meso-diaminopimelic acid to the nucleotide precursor UDP-N-acetylmuramoyl-L-alanyl-D-glutamate (UMAG) in the biosynthesis of bacterial cell-wall peptidoglycan.</text>
</comment>
<comment type="catalytic activity">
    <reaction evidence="1">
        <text>UDP-N-acetyl-alpha-D-muramoyl-L-alanyl-D-glutamate + meso-2,6-diaminopimelate + ATP = UDP-N-acetyl-alpha-D-muramoyl-L-alanyl-gamma-D-glutamyl-meso-2,6-diaminopimelate + ADP + phosphate + H(+)</text>
        <dbReference type="Rhea" id="RHEA:23676"/>
        <dbReference type="ChEBI" id="CHEBI:15378"/>
        <dbReference type="ChEBI" id="CHEBI:30616"/>
        <dbReference type="ChEBI" id="CHEBI:43474"/>
        <dbReference type="ChEBI" id="CHEBI:57791"/>
        <dbReference type="ChEBI" id="CHEBI:83900"/>
        <dbReference type="ChEBI" id="CHEBI:83905"/>
        <dbReference type="ChEBI" id="CHEBI:456216"/>
        <dbReference type="EC" id="6.3.2.13"/>
    </reaction>
</comment>
<comment type="cofactor">
    <cofactor evidence="1">
        <name>Mg(2+)</name>
        <dbReference type="ChEBI" id="CHEBI:18420"/>
    </cofactor>
</comment>
<comment type="pathway">
    <text evidence="1">Cell wall biogenesis; peptidoglycan biosynthesis.</text>
</comment>
<comment type="subcellular location">
    <subcellularLocation>
        <location evidence="1">Cytoplasm</location>
    </subcellularLocation>
</comment>
<comment type="PTM">
    <text evidence="1">Carboxylation is probably crucial for Mg(2+) binding and, consequently, for the gamma-phosphate positioning of ATP.</text>
</comment>
<comment type="similarity">
    <text evidence="1">Belongs to the MurCDEF family. MurE subfamily.</text>
</comment>
<organism>
    <name type="scientific">Chlamydia trachomatis serovar A (strain ATCC VR-571B / DSM 19440 / HAR-13)</name>
    <dbReference type="NCBI Taxonomy" id="315277"/>
    <lineage>
        <taxon>Bacteria</taxon>
        <taxon>Pseudomonadati</taxon>
        <taxon>Chlamydiota</taxon>
        <taxon>Chlamydiia</taxon>
        <taxon>Chlamydiales</taxon>
        <taxon>Chlamydiaceae</taxon>
        <taxon>Chlamydia/Chlamydophila group</taxon>
        <taxon>Chlamydia</taxon>
    </lineage>
</organism>
<keyword id="KW-0067">ATP-binding</keyword>
<keyword id="KW-0131">Cell cycle</keyword>
<keyword id="KW-0132">Cell division</keyword>
<keyword id="KW-0133">Cell shape</keyword>
<keyword id="KW-0961">Cell wall biogenesis/degradation</keyword>
<keyword id="KW-0963">Cytoplasm</keyword>
<keyword id="KW-0436">Ligase</keyword>
<keyword id="KW-0460">Magnesium</keyword>
<keyword id="KW-0547">Nucleotide-binding</keyword>
<keyword id="KW-0573">Peptidoglycan synthesis</keyword>
<evidence type="ECO:0000255" key="1">
    <source>
        <dbReference type="HAMAP-Rule" id="MF_00208"/>
    </source>
</evidence>
<sequence length="483" mass="53334">MHLDQLLQNIPAKIYGKVESIPVRNLTRDSRCVGVGDIFIARQGQFCNGNDYSSQAVANGAIAVLSSLYNPFLSVVQIIAEDPIALEASLAARFYNNPSRHLDVIGITGTNGKTTVSCLVRELMERSGRRTGLIGTIEHILGENRIIDSFTTPDAILLQKYFAEMVKQNLSAAVMEVSSIGMALGRVRETEFLAGVLTNITSDHLDFHGSLEEYIAAKKQFFASLPEKGIAVVNLDCEYAPSFLNGSQARAVSYAIHQEADYRADRLKLYSSGSSYDIWYQGQVFPCETSLIGEHNVYNVLASLAVVHQFLGRDFADLVRDVRFLSAPKGRLDPILLGPFPVYIDYAHTPDALDNVCRILLQLLPKDGRLIIVFGCGGDRDRVKRPLMAKVSEHYGFSFVTSDNPRTEDPDQIIADICKGFSTDHYVVESDRKLAIEKAISMASDKDIVLVAGKGHEGYQIFKHQTIVFDDREVVCEALAALC</sequence>
<dbReference type="EC" id="6.3.2.13" evidence="1"/>
<dbReference type="EMBL" id="CP000051">
    <property type="protein sequence ID" value="AAX50529.1"/>
    <property type="molecule type" value="Genomic_DNA"/>
</dbReference>
<dbReference type="RefSeq" id="WP_009871616.1">
    <property type="nucleotide sequence ID" value="NC_007429.1"/>
</dbReference>
<dbReference type="SMR" id="Q3KM93"/>
<dbReference type="KEGG" id="cta:CTA_0291"/>
<dbReference type="HOGENOM" id="CLU_022291_4_1_0"/>
<dbReference type="UniPathway" id="UPA00219"/>
<dbReference type="Proteomes" id="UP000002532">
    <property type="component" value="Chromosome"/>
</dbReference>
<dbReference type="GO" id="GO:0005737">
    <property type="term" value="C:cytoplasm"/>
    <property type="evidence" value="ECO:0007669"/>
    <property type="project" value="UniProtKB-SubCell"/>
</dbReference>
<dbReference type="GO" id="GO:0005524">
    <property type="term" value="F:ATP binding"/>
    <property type="evidence" value="ECO:0007669"/>
    <property type="project" value="UniProtKB-UniRule"/>
</dbReference>
<dbReference type="GO" id="GO:0000287">
    <property type="term" value="F:magnesium ion binding"/>
    <property type="evidence" value="ECO:0007669"/>
    <property type="project" value="UniProtKB-UniRule"/>
</dbReference>
<dbReference type="GO" id="GO:0008765">
    <property type="term" value="F:UDP-N-acetylmuramoylalanyl-D-glutamate-2,6-diaminopimelate ligase activity"/>
    <property type="evidence" value="ECO:0007669"/>
    <property type="project" value="UniProtKB-UniRule"/>
</dbReference>
<dbReference type="GO" id="GO:0051301">
    <property type="term" value="P:cell division"/>
    <property type="evidence" value="ECO:0007669"/>
    <property type="project" value="UniProtKB-KW"/>
</dbReference>
<dbReference type="GO" id="GO:0071555">
    <property type="term" value="P:cell wall organization"/>
    <property type="evidence" value="ECO:0007669"/>
    <property type="project" value="UniProtKB-KW"/>
</dbReference>
<dbReference type="GO" id="GO:0009252">
    <property type="term" value="P:peptidoglycan biosynthetic process"/>
    <property type="evidence" value="ECO:0007669"/>
    <property type="project" value="UniProtKB-UniRule"/>
</dbReference>
<dbReference type="GO" id="GO:0008360">
    <property type="term" value="P:regulation of cell shape"/>
    <property type="evidence" value="ECO:0007669"/>
    <property type="project" value="UniProtKB-KW"/>
</dbReference>
<dbReference type="Gene3D" id="3.90.190.20">
    <property type="entry name" value="Mur ligase, C-terminal domain"/>
    <property type="match status" value="1"/>
</dbReference>
<dbReference type="Gene3D" id="3.40.1190.10">
    <property type="entry name" value="Mur-like, catalytic domain"/>
    <property type="match status" value="1"/>
</dbReference>
<dbReference type="Gene3D" id="3.40.1390.10">
    <property type="entry name" value="MurE/MurF, N-terminal domain"/>
    <property type="match status" value="1"/>
</dbReference>
<dbReference type="HAMAP" id="MF_00208">
    <property type="entry name" value="MurE"/>
    <property type="match status" value="1"/>
</dbReference>
<dbReference type="InterPro" id="IPR036565">
    <property type="entry name" value="Mur-like_cat_sf"/>
</dbReference>
<dbReference type="InterPro" id="IPR004101">
    <property type="entry name" value="Mur_ligase_C"/>
</dbReference>
<dbReference type="InterPro" id="IPR036615">
    <property type="entry name" value="Mur_ligase_C_dom_sf"/>
</dbReference>
<dbReference type="InterPro" id="IPR013221">
    <property type="entry name" value="Mur_ligase_cen"/>
</dbReference>
<dbReference type="InterPro" id="IPR035911">
    <property type="entry name" value="MurE/MurF_N"/>
</dbReference>
<dbReference type="InterPro" id="IPR005761">
    <property type="entry name" value="UDP-N-AcMur-Glu-dNH2Pim_ligase"/>
</dbReference>
<dbReference type="NCBIfam" id="TIGR01085">
    <property type="entry name" value="murE"/>
    <property type="match status" value="1"/>
</dbReference>
<dbReference type="NCBIfam" id="NF001126">
    <property type="entry name" value="PRK00139.1-4"/>
    <property type="match status" value="1"/>
</dbReference>
<dbReference type="PANTHER" id="PTHR23135">
    <property type="entry name" value="MUR LIGASE FAMILY MEMBER"/>
    <property type="match status" value="1"/>
</dbReference>
<dbReference type="PANTHER" id="PTHR23135:SF4">
    <property type="entry name" value="UDP-N-ACETYLMURAMOYL-L-ALANYL-D-GLUTAMATE--2,6-DIAMINOPIMELATE LIGASE MURE HOMOLOG, CHLOROPLASTIC"/>
    <property type="match status" value="1"/>
</dbReference>
<dbReference type="Pfam" id="PF02875">
    <property type="entry name" value="Mur_ligase_C"/>
    <property type="match status" value="1"/>
</dbReference>
<dbReference type="Pfam" id="PF08245">
    <property type="entry name" value="Mur_ligase_M"/>
    <property type="match status" value="1"/>
</dbReference>
<dbReference type="SUPFAM" id="SSF53623">
    <property type="entry name" value="MurD-like peptide ligases, catalytic domain"/>
    <property type="match status" value="1"/>
</dbReference>
<dbReference type="SUPFAM" id="SSF53244">
    <property type="entry name" value="MurD-like peptide ligases, peptide-binding domain"/>
    <property type="match status" value="1"/>
</dbReference>
<dbReference type="SUPFAM" id="SSF63418">
    <property type="entry name" value="MurE/MurF N-terminal domain"/>
    <property type="match status" value="1"/>
</dbReference>
<accession>Q3KM93</accession>